<dbReference type="EC" id="2.4.2.10" evidence="1"/>
<dbReference type="EMBL" id="AM295007">
    <property type="protein sequence ID" value="CAM30430.1"/>
    <property type="molecule type" value="Genomic_DNA"/>
</dbReference>
<dbReference type="RefSeq" id="WP_011888972.1">
    <property type="nucleotide sequence ID" value="NC_009332.1"/>
</dbReference>
<dbReference type="SMR" id="A2RF04"/>
<dbReference type="KEGG" id="spf:SpyM51104"/>
<dbReference type="HOGENOM" id="CLU_074878_1_1_9"/>
<dbReference type="UniPathway" id="UPA00070">
    <property type="reaction ID" value="UER00119"/>
</dbReference>
<dbReference type="GO" id="GO:0000287">
    <property type="term" value="F:magnesium ion binding"/>
    <property type="evidence" value="ECO:0007669"/>
    <property type="project" value="UniProtKB-UniRule"/>
</dbReference>
<dbReference type="GO" id="GO:0004588">
    <property type="term" value="F:orotate phosphoribosyltransferase activity"/>
    <property type="evidence" value="ECO:0007669"/>
    <property type="project" value="UniProtKB-UniRule"/>
</dbReference>
<dbReference type="GO" id="GO:0044205">
    <property type="term" value="P:'de novo' UMP biosynthetic process"/>
    <property type="evidence" value="ECO:0007669"/>
    <property type="project" value="UniProtKB-UniRule"/>
</dbReference>
<dbReference type="GO" id="GO:0019856">
    <property type="term" value="P:pyrimidine nucleobase biosynthetic process"/>
    <property type="evidence" value="ECO:0007669"/>
    <property type="project" value="TreeGrafter"/>
</dbReference>
<dbReference type="CDD" id="cd06223">
    <property type="entry name" value="PRTases_typeI"/>
    <property type="match status" value="1"/>
</dbReference>
<dbReference type="Gene3D" id="3.40.50.2020">
    <property type="match status" value="1"/>
</dbReference>
<dbReference type="HAMAP" id="MF_01208">
    <property type="entry name" value="PyrE"/>
    <property type="match status" value="1"/>
</dbReference>
<dbReference type="InterPro" id="IPR023031">
    <property type="entry name" value="OPRT"/>
</dbReference>
<dbReference type="InterPro" id="IPR004467">
    <property type="entry name" value="Or_phspho_trans_dom"/>
</dbReference>
<dbReference type="InterPro" id="IPR000836">
    <property type="entry name" value="PRibTrfase_dom"/>
</dbReference>
<dbReference type="InterPro" id="IPR029057">
    <property type="entry name" value="PRTase-like"/>
</dbReference>
<dbReference type="NCBIfam" id="TIGR00336">
    <property type="entry name" value="pyrE"/>
    <property type="match status" value="1"/>
</dbReference>
<dbReference type="PANTHER" id="PTHR19278">
    <property type="entry name" value="OROTATE PHOSPHORIBOSYLTRANSFERASE"/>
    <property type="match status" value="1"/>
</dbReference>
<dbReference type="PANTHER" id="PTHR19278:SF9">
    <property type="entry name" value="URIDINE 5'-MONOPHOSPHATE SYNTHASE"/>
    <property type="match status" value="1"/>
</dbReference>
<dbReference type="Pfam" id="PF00156">
    <property type="entry name" value="Pribosyltran"/>
    <property type="match status" value="1"/>
</dbReference>
<dbReference type="SUPFAM" id="SSF53271">
    <property type="entry name" value="PRTase-like"/>
    <property type="match status" value="1"/>
</dbReference>
<dbReference type="PROSITE" id="PS00103">
    <property type="entry name" value="PUR_PYR_PR_TRANSFER"/>
    <property type="match status" value="1"/>
</dbReference>
<accession>A2RF04</accession>
<gene>
    <name evidence="1" type="primary">pyrE</name>
    <name type="ordered locus">SpyM51104</name>
</gene>
<comment type="function">
    <text evidence="1">Catalyzes the transfer of a ribosyl phosphate group from 5-phosphoribose 1-diphosphate to orotate, leading to the formation of orotidine monophosphate (OMP).</text>
</comment>
<comment type="catalytic activity">
    <reaction evidence="1">
        <text>orotidine 5'-phosphate + diphosphate = orotate + 5-phospho-alpha-D-ribose 1-diphosphate</text>
        <dbReference type="Rhea" id="RHEA:10380"/>
        <dbReference type="ChEBI" id="CHEBI:30839"/>
        <dbReference type="ChEBI" id="CHEBI:33019"/>
        <dbReference type="ChEBI" id="CHEBI:57538"/>
        <dbReference type="ChEBI" id="CHEBI:58017"/>
        <dbReference type="EC" id="2.4.2.10"/>
    </reaction>
</comment>
<comment type="cofactor">
    <cofactor evidence="1">
        <name>Mg(2+)</name>
        <dbReference type="ChEBI" id="CHEBI:18420"/>
    </cofactor>
</comment>
<comment type="pathway">
    <text evidence="1">Pyrimidine metabolism; UMP biosynthesis via de novo pathway; UMP from orotate: step 1/2.</text>
</comment>
<comment type="subunit">
    <text evidence="1">Homodimer.</text>
</comment>
<comment type="similarity">
    <text evidence="1">Belongs to the purine/pyrimidine phosphoribosyltransferase family. PyrE subfamily.</text>
</comment>
<sequence>MTLASQIATQLLDIKAVYLKPEDPFTWASGIKSPIYTDNRVTLSYPKTRDLIENGFVETIRAHFPEVEVIAGTATAGIPHGAIIADKMTLPFAYIRSKLKDHGAGNQIEGRVLKGQKMVIIEDLISTGGSVLDAAAAASREGADVLGVVAIFTYELPKASQNFKEAGIKLITLSNYTELIAVAKLQGYITNDGLHLLKKFKEDQVNWQQ</sequence>
<protein>
    <recommendedName>
        <fullName evidence="1">Orotate phosphoribosyltransferase</fullName>
        <shortName evidence="1">OPRT</shortName>
        <shortName evidence="1">OPRTase</shortName>
        <ecNumber evidence="1">2.4.2.10</ecNumber>
    </recommendedName>
</protein>
<organism>
    <name type="scientific">Streptococcus pyogenes serotype M5 (strain Manfredo)</name>
    <dbReference type="NCBI Taxonomy" id="160491"/>
    <lineage>
        <taxon>Bacteria</taxon>
        <taxon>Bacillati</taxon>
        <taxon>Bacillota</taxon>
        <taxon>Bacilli</taxon>
        <taxon>Lactobacillales</taxon>
        <taxon>Streptococcaceae</taxon>
        <taxon>Streptococcus</taxon>
    </lineage>
</organism>
<name>PYRE_STRPG</name>
<keyword id="KW-0328">Glycosyltransferase</keyword>
<keyword id="KW-0460">Magnesium</keyword>
<keyword id="KW-0665">Pyrimidine biosynthesis</keyword>
<keyword id="KW-0808">Transferase</keyword>
<evidence type="ECO:0000255" key="1">
    <source>
        <dbReference type="HAMAP-Rule" id="MF_01208"/>
    </source>
</evidence>
<proteinExistence type="inferred from homology"/>
<reference key="1">
    <citation type="journal article" date="2007" name="J. Bacteriol.">
        <title>Complete genome of acute rheumatic fever-associated serotype M5 Streptococcus pyogenes strain Manfredo.</title>
        <authorList>
            <person name="Holden M.T.G."/>
            <person name="Scott A."/>
            <person name="Cherevach I."/>
            <person name="Chillingworth T."/>
            <person name="Churcher C."/>
            <person name="Cronin A."/>
            <person name="Dowd L."/>
            <person name="Feltwell T."/>
            <person name="Hamlin N."/>
            <person name="Holroyd S."/>
            <person name="Jagels K."/>
            <person name="Moule S."/>
            <person name="Mungall K."/>
            <person name="Quail M.A."/>
            <person name="Price C."/>
            <person name="Rabbinowitsch E."/>
            <person name="Sharp S."/>
            <person name="Skelton J."/>
            <person name="Whitehead S."/>
            <person name="Barrell B.G."/>
            <person name="Kehoe M."/>
            <person name="Parkhill J."/>
        </authorList>
    </citation>
    <scope>NUCLEOTIDE SEQUENCE [LARGE SCALE GENOMIC DNA]</scope>
    <source>
        <strain>Manfredo</strain>
    </source>
</reference>
<feature type="chain" id="PRO_1000066311" description="Orotate phosphoribosyltransferase">
    <location>
        <begin position="1"/>
        <end position="209"/>
    </location>
</feature>
<feature type="binding site" evidence="1">
    <location>
        <position position="96"/>
    </location>
    <ligand>
        <name>5-phospho-alpha-D-ribose 1-diphosphate</name>
        <dbReference type="ChEBI" id="CHEBI:58017"/>
        <note>ligand shared between dimeric partners</note>
    </ligand>
</feature>
<feature type="binding site" evidence="1">
    <location>
        <position position="100"/>
    </location>
    <ligand>
        <name>5-phospho-alpha-D-ribose 1-diphosphate</name>
        <dbReference type="ChEBI" id="CHEBI:58017"/>
        <note>ligand shared between dimeric partners</note>
    </ligand>
</feature>
<feature type="binding site" evidence="1">
    <location>
        <position position="102"/>
    </location>
    <ligand>
        <name>5-phospho-alpha-D-ribose 1-diphosphate</name>
        <dbReference type="ChEBI" id="CHEBI:58017"/>
        <note>ligand shared between dimeric partners</note>
    </ligand>
</feature>
<feature type="binding site" description="in other chain" evidence="1">
    <location>
        <begin position="122"/>
        <end position="130"/>
    </location>
    <ligand>
        <name>5-phospho-alpha-D-ribose 1-diphosphate</name>
        <dbReference type="ChEBI" id="CHEBI:58017"/>
        <note>ligand shared between dimeric partners</note>
    </ligand>
</feature>
<feature type="binding site" evidence="1">
    <location>
        <position position="126"/>
    </location>
    <ligand>
        <name>orotate</name>
        <dbReference type="ChEBI" id="CHEBI:30839"/>
    </ligand>
</feature>